<gene>
    <name evidence="1" type="primary">glyA</name>
    <name type="ordered locus">Sden_1142</name>
</gene>
<organism>
    <name type="scientific">Shewanella denitrificans (strain OS217 / ATCC BAA-1090 / DSM 15013)</name>
    <dbReference type="NCBI Taxonomy" id="318161"/>
    <lineage>
        <taxon>Bacteria</taxon>
        <taxon>Pseudomonadati</taxon>
        <taxon>Pseudomonadota</taxon>
        <taxon>Gammaproteobacteria</taxon>
        <taxon>Alteromonadales</taxon>
        <taxon>Shewanellaceae</taxon>
        <taxon>Shewanella</taxon>
    </lineage>
</organism>
<feature type="chain" id="PRO_1000006315" description="Serine hydroxymethyltransferase">
    <location>
        <begin position="1"/>
        <end position="417"/>
    </location>
</feature>
<feature type="binding site" evidence="1">
    <location>
        <position position="121"/>
    </location>
    <ligand>
        <name>(6S)-5,6,7,8-tetrahydrofolate</name>
        <dbReference type="ChEBI" id="CHEBI:57453"/>
    </ligand>
</feature>
<feature type="binding site" evidence="1">
    <location>
        <begin position="125"/>
        <end position="127"/>
    </location>
    <ligand>
        <name>(6S)-5,6,7,8-tetrahydrofolate</name>
        <dbReference type="ChEBI" id="CHEBI:57453"/>
    </ligand>
</feature>
<feature type="binding site" evidence="1">
    <location>
        <begin position="355"/>
        <end position="357"/>
    </location>
    <ligand>
        <name>(6S)-5,6,7,8-tetrahydrofolate</name>
        <dbReference type="ChEBI" id="CHEBI:57453"/>
    </ligand>
</feature>
<feature type="site" description="Plays an important role in substrate specificity" evidence="1">
    <location>
        <position position="228"/>
    </location>
</feature>
<feature type="modified residue" description="N6-(pyridoxal phosphate)lysine" evidence="1">
    <location>
        <position position="229"/>
    </location>
</feature>
<keyword id="KW-0028">Amino-acid biosynthesis</keyword>
<keyword id="KW-0963">Cytoplasm</keyword>
<keyword id="KW-0554">One-carbon metabolism</keyword>
<keyword id="KW-0663">Pyridoxal phosphate</keyword>
<keyword id="KW-1185">Reference proteome</keyword>
<keyword id="KW-0808">Transferase</keyword>
<proteinExistence type="inferred from homology"/>
<evidence type="ECO:0000255" key="1">
    <source>
        <dbReference type="HAMAP-Rule" id="MF_00051"/>
    </source>
</evidence>
<accession>Q12Q48</accession>
<name>GLYA_SHEDO</name>
<reference key="1">
    <citation type="submission" date="2006-03" db="EMBL/GenBank/DDBJ databases">
        <title>Complete sequence of Shewanella denitrificans OS217.</title>
        <authorList>
            <consortium name="US DOE Joint Genome Institute"/>
            <person name="Copeland A."/>
            <person name="Lucas S."/>
            <person name="Lapidus A."/>
            <person name="Barry K."/>
            <person name="Detter J.C."/>
            <person name="Glavina del Rio T."/>
            <person name="Hammon N."/>
            <person name="Israni S."/>
            <person name="Dalin E."/>
            <person name="Tice H."/>
            <person name="Pitluck S."/>
            <person name="Brettin T."/>
            <person name="Bruce D."/>
            <person name="Han C."/>
            <person name="Tapia R."/>
            <person name="Gilna P."/>
            <person name="Kiss H."/>
            <person name="Schmutz J."/>
            <person name="Larimer F."/>
            <person name="Land M."/>
            <person name="Hauser L."/>
            <person name="Kyrpides N."/>
            <person name="Lykidis A."/>
            <person name="Richardson P."/>
        </authorList>
    </citation>
    <scope>NUCLEOTIDE SEQUENCE [LARGE SCALE GENOMIC DNA]</scope>
    <source>
        <strain>OS217 / ATCC BAA-1090 / DSM 15013</strain>
    </source>
</reference>
<comment type="function">
    <text evidence="1">Catalyzes the reversible interconversion of serine and glycine with tetrahydrofolate (THF) serving as the one-carbon carrier. This reaction serves as the major source of one-carbon groups required for the biosynthesis of purines, thymidylate, methionine, and other important biomolecules. Also exhibits THF-independent aldolase activity toward beta-hydroxyamino acids, producing glycine and aldehydes, via a retro-aldol mechanism.</text>
</comment>
<comment type="catalytic activity">
    <reaction evidence="1">
        <text>(6R)-5,10-methylene-5,6,7,8-tetrahydrofolate + glycine + H2O = (6S)-5,6,7,8-tetrahydrofolate + L-serine</text>
        <dbReference type="Rhea" id="RHEA:15481"/>
        <dbReference type="ChEBI" id="CHEBI:15377"/>
        <dbReference type="ChEBI" id="CHEBI:15636"/>
        <dbReference type="ChEBI" id="CHEBI:33384"/>
        <dbReference type="ChEBI" id="CHEBI:57305"/>
        <dbReference type="ChEBI" id="CHEBI:57453"/>
        <dbReference type="EC" id="2.1.2.1"/>
    </reaction>
</comment>
<comment type="cofactor">
    <cofactor evidence="1">
        <name>pyridoxal 5'-phosphate</name>
        <dbReference type="ChEBI" id="CHEBI:597326"/>
    </cofactor>
</comment>
<comment type="pathway">
    <text evidence="1">One-carbon metabolism; tetrahydrofolate interconversion.</text>
</comment>
<comment type="pathway">
    <text evidence="1">Amino-acid biosynthesis; glycine biosynthesis; glycine from L-serine: step 1/1.</text>
</comment>
<comment type="subunit">
    <text evidence="1">Homodimer.</text>
</comment>
<comment type="subcellular location">
    <subcellularLocation>
        <location evidence="1">Cytoplasm</location>
    </subcellularLocation>
</comment>
<comment type="similarity">
    <text evidence="1">Belongs to the SHMT family.</text>
</comment>
<protein>
    <recommendedName>
        <fullName evidence="1">Serine hydroxymethyltransferase</fullName>
        <shortName evidence="1">SHMT</shortName>
        <shortName evidence="1">Serine methylase</shortName>
        <ecNumber evidence="1">2.1.2.1</ecNumber>
    </recommendedName>
</protein>
<dbReference type="EC" id="2.1.2.1" evidence="1"/>
<dbReference type="EMBL" id="CP000302">
    <property type="protein sequence ID" value="ABE54428.1"/>
    <property type="molecule type" value="Genomic_DNA"/>
</dbReference>
<dbReference type="RefSeq" id="WP_011495589.1">
    <property type="nucleotide sequence ID" value="NC_007954.1"/>
</dbReference>
<dbReference type="SMR" id="Q12Q48"/>
<dbReference type="STRING" id="318161.Sden_1142"/>
<dbReference type="KEGG" id="sdn:Sden_1142"/>
<dbReference type="eggNOG" id="COG0112">
    <property type="taxonomic scope" value="Bacteria"/>
</dbReference>
<dbReference type="HOGENOM" id="CLU_022477_2_1_6"/>
<dbReference type="OrthoDB" id="9803846at2"/>
<dbReference type="UniPathway" id="UPA00193"/>
<dbReference type="UniPathway" id="UPA00288">
    <property type="reaction ID" value="UER01023"/>
</dbReference>
<dbReference type="Proteomes" id="UP000001982">
    <property type="component" value="Chromosome"/>
</dbReference>
<dbReference type="GO" id="GO:0005829">
    <property type="term" value="C:cytosol"/>
    <property type="evidence" value="ECO:0007669"/>
    <property type="project" value="TreeGrafter"/>
</dbReference>
<dbReference type="GO" id="GO:0004372">
    <property type="term" value="F:glycine hydroxymethyltransferase activity"/>
    <property type="evidence" value="ECO:0007669"/>
    <property type="project" value="UniProtKB-UniRule"/>
</dbReference>
<dbReference type="GO" id="GO:0030170">
    <property type="term" value="F:pyridoxal phosphate binding"/>
    <property type="evidence" value="ECO:0007669"/>
    <property type="project" value="UniProtKB-UniRule"/>
</dbReference>
<dbReference type="GO" id="GO:0019264">
    <property type="term" value="P:glycine biosynthetic process from serine"/>
    <property type="evidence" value="ECO:0007669"/>
    <property type="project" value="UniProtKB-UniRule"/>
</dbReference>
<dbReference type="GO" id="GO:0035999">
    <property type="term" value="P:tetrahydrofolate interconversion"/>
    <property type="evidence" value="ECO:0007669"/>
    <property type="project" value="UniProtKB-UniRule"/>
</dbReference>
<dbReference type="CDD" id="cd00378">
    <property type="entry name" value="SHMT"/>
    <property type="match status" value="1"/>
</dbReference>
<dbReference type="FunFam" id="3.40.640.10:FF:000001">
    <property type="entry name" value="Serine hydroxymethyltransferase"/>
    <property type="match status" value="1"/>
</dbReference>
<dbReference type="FunFam" id="3.90.1150.10:FF:000003">
    <property type="entry name" value="Serine hydroxymethyltransferase"/>
    <property type="match status" value="1"/>
</dbReference>
<dbReference type="Gene3D" id="3.90.1150.10">
    <property type="entry name" value="Aspartate Aminotransferase, domain 1"/>
    <property type="match status" value="1"/>
</dbReference>
<dbReference type="Gene3D" id="3.40.640.10">
    <property type="entry name" value="Type I PLP-dependent aspartate aminotransferase-like (Major domain)"/>
    <property type="match status" value="1"/>
</dbReference>
<dbReference type="HAMAP" id="MF_00051">
    <property type="entry name" value="SHMT"/>
    <property type="match status" value="1"/>
</dbReference>
<dbReference type="InterPro" id="IPR015424">
    <property type="entry name" value="PyrdxlP-dep_Trfase"/>
</dbReference>
<dbReference type="InterPro" id="IPR015421">
    <property type="entry name" value="PyrdxlP-dep_Trfase_major"/>
</dbReference>
<dbReference type="InterPro" id="IPR015422">
    <property type="entry name" value="PyrdxlP-dep_Trfase_small"/>
</dbReference>
<dbReference type="InterPro" id="IPR001085">
    <property type="entry name" value="Ser_HO-MeTrfase"/>
</dbReference>
<dbReference type="InterPro" id="IPR049943">
    <property type="entry name" value="Ser_HO-MeTrfase-like"/>
</dbReference>
<dbReference type="InterPro" id="IPR019798">
    <property type="entry name" value="Ser_HO-MeTrfase_PLP_BS"/>
</dbReference>
<dbReference type="InterPro" id="IPR039429">
    <property type="entry name" value="SHMT-like_dom"/>
</dbReference>
<dbReference type="NCBIfam" id="NF000586">
    <property type="entry name" value="PRK00011.1"/>
    <property type="match status" value="1"/>
</dbReference>
<dbReference type="PANTHER" id="PTHR11680">
    <property type="entry name" value="SERINE HYDROXYMETHYLTRANSFERASE"/>
    <property type="match status" value="1"/>
</dbReference>
<dbReference type="PANTHER" id="PTHR11680:SF50">
    <property type="entry name" value="SERINE HYDROXYMETHYLTRANSFERASE"/>
    <property type="match status" value="1"/>
</dbReference>
<dbReference type="Pfam" id="PF00464">
    <property type="entry name" value="SHMT"/>
    <property type="match status" value="1"/>
</dbReference>
<dbReference type="PIRSF" id="PIRSF000412">
    <property type="entry name" value="SHMT"/>
    <property type="match status" value="1"/>
</dbReference>
<dbReference type="SUPFAM" id="SSF53383">
    <property type="entry name" value="PLP-dependent transferases"/>
    <property type="match status" value="1"/>
</dbReference>
<dbReference type="PROSITE" id="PS00096">
    <property type="entry name" value="SHMT"/>
    <property type="match status" value="1"/>
</dbReference>
<sequence length="417" mass="45162">MLNKAMNIADYDPQLFKAIEDETRRQEEHIELIASENYTSPRVMEAQGSQLTNKYAEGYPGKRYYGGCEYVDVVETLAIERAKELFGATYANVQPHSGSQANSAVYMALLKPGDTVLGMNLAHGGHLTHGSPVNFSGKLYNIIPYGIDEAGKIDYVEMERLAVEHKPKMMIGGFSAFSGIVDWAKMREIADKIGAYLFVDMAHVAGLIAAGVYPNPVPHAHVVTSTTHKTLAGPRGGLILSAADDEDLYKKLNSAVFPGGQGGPLMHVIAGKAVAFKEALEPEFKTYQQQVVKNAKAMVEVFIERGYKIVSGGTDNHLMLVDLIGRDLTGKEADAALGSANITVNKNSVPNDPRSPFVTSGVRIGTPAITRRGFKEAEAKALTTWVCDILDDANNPAVIERVKGEVLALCAKYPVYA</sequence>